<comment type="function">
    <text>Endogenous activator of intestinal guanylate cyclase. It stimulates this enzyme through the same receptor binding region as the heat-stable enterotoxins.</text>
</comment>
<comment type="subcellular location">
    <subcellularLocation>
        <location>Secreted</location>
    </subcellularLocation>
</comment>
<comment type="similarity">
    <text evidence="3">Belongs to the guanylin family.</text>
</comment>
<organism>
    <name type="scientific">Sus scrofa</name>
    <name type="common">Pig</name>
    <dbReference type="NCBI Taxonomy" id="9823"/>
    <lineage>
        <taxon>Eukaryota</taxon>
        <taxon>Metazoa</taxon>
        <taxon>Chordata</taxon>
        <taxon>Craniata</taxon>
        <taxon>Vertebrata</taxon>
        <taxon>Euteleostomi</taxon>
        <taxon>Mammalia</taxon>
        <taxon>Eutheria</taxon>
        <taxon>Laurasiatheria</taxon>
        <taxon>Artiodactyla</taxon>
        <taxon>Suina</taxon>
        <taxon>Suidae</taxon>
        <taxon>Sus</taxon>
    </lineage>
</organism>
<reference key="1">
    <citation type="journal article" date="1999" name="Biochem. Biophys. Res. Commun.">
        <title>Porcine guanylin and uroguanylin: cDNA sequences, deduced amino acid sequences, and biological activity of the chemically synthesized peptides.</title>
        <authorList>
            <person name="Maegert H.-J."/>
            <person name="Hill O."/>
            <person name="Zucht H.-D."/>
            <person name="Martin S."/>
            <person name="Meyer M."/>
            <person name="Forssmann W.-G."/>
            <person name="Adermann K."/>
        </authorList>
    </citation>
    <scope>NUCLEOTIDE SEQUENCE [MRNA]</scope>
    <source>
        <tissue>Jejunum</tissue>
    </source>
</reference>
<protein>
    <recommendedName>
        <fullName>Guanylin</fullName>
    </recommendedName>
    <alternativeName>
        <fullName>Guanylate cyclase activator 2A</fullName>
    </alternativeName>
</protein>
<gene>
    <name type="primary">GUCA2A</name>
    <name type="synonym">GUCA2</name>
</gene>
<name>GUC2A_PIG</name>
<feature type="signal peptide" evidence="2">
    <location>
        <begin position="1"/>
        <end position="21"/>
    </location>
</feature>
<feature type="propeptide" id="PRO_0000013139">
    <location>
        <begin position="22"/>
        <end position="94"/>
    </location>
</feature>
<feature type="peptide" id="PRO_0000013140" description="Guanylin">
    <location>
        <begin position="95"/>
        <end position="109"/>
    </location>
</feature>
<feature type="disulfide bond" evidence="1">
    <location>
        <begin position="63"/>
        <end position="76"/>
    </location>
</feature>
<feature type="disulfide bond" evidence="1">
    <location>
        <begin position="98"/>
        <end position="106"/>
    </location>
</feature>
<feature type="disulfide bond" evidence="1">
    <location>
        <begin position="101"/>
        <end position="109"/>
    </location>
</feature>
<keyword id="KW-1015">Disulfide bond</keyword>
<keyword id="KW-1185">Reference proteome</keyword>
<keyword id="KW-0964">Secreted</keyword>
<keyword id="KW-0732">Signal</keyword>
<dbReference type="EMBL" id="Z73607">
    <property type="protein sequence ID" value="CAA97974.1"/>
    <property type="molecule type" value="mRNA"/>
</dbReference>
<dbReference type="RefSeq" id="NP_001153746.1">
    <property type="nucleotide sequence ID" value="NM_001160274.1"/>
</dbReference>
<dbReference type="RefSeq" id="XP_003360909.1">
    <property type="nucleotide sequence ID" value="XM_003360861.2"/>
</dbReference>
<dbReference type="SMR" id="P79897"/>
<dbReference type="FunCoup" id="P79897">
    <property type="interactions" value="314"/>
</dbReference>
<dbReference type="PaxDb" id="9823-ENSSSCP00000004290"/>
<dbReference type="PeptideAtlas" id="P79897"/>
<dbReference type="Ensembl" id="ENSSSCT00000100947.1">
    <property type="protein sequence ID" value="ENSSSCP00000078516.1"/>
    <property type="gene ID" value="ENSSSCG00000055523.1"/>
</dbReference>
<dbReference type="Ensembl" id="ENSSSCT00115032011">
    <property type="protein sequence ID" value="ENSSSCP00115030432"/>
    <property type="gene ID" value="ENSSSCG00115018088"/>
</dbReference>
<dbReference type="GeneID" id="100301560"/>
<dbReference type="KEGG" id="ssc:100301560"/>
<dbReference type="CTD" id="2980"/>
<dbReference type="eggNOG" id="ENOG502S7QR">
    <property type="taxonomic scope" value="Eukaryota"/>
</dbReference>
<dbReference type="GeneTree" id="ENSGT00940000154436"/>
<dbReference type="HOGENOM" id="CLU_166952_0_0_1"/>
<dbReference type="InParanoid" id="P79897"/>
<dbReference type="OMA" id="CAEPMLP"/>
<dbReference type="OrthoDB" id="9926421at2759"/>
<dbReference type="TreeFam" id="TF330731"/>
<dbReference type="Reactome" id="R-SSC-8935690">
    <property type="pathway name" value="Digestion"/>
</dbReference>
<dbReference type="Proteomes" id="UP000008227">
    <property type="component" value="Chromosome 6"/>
</dbReference>
<dbReference type="Proteomes" id="UP000314985">
    <property type="component" value="Unplaced"/>
</dbReference>
<dbReference type="Proteomes" id="UP000694570">
    <property type="component" value="Unplaced"/>
</dbReference>
<dbReference type="Proteomes" id="UP000694571">
    <property type="component" value="Unplaced"/>
</dbReference>
<dbReference type="Proteomes" id="UP000694720">
    <property type="component" value="Unplaced"/>
</dbReference>
<dbReference type="Proteomes" id="UP000694722">
    <property type="component" value="Unplaced"/>
</dbReference>
<dbReference type="Proteomes" id="UP000694723">
    <property type="component" value="Unplaced"/>
</dbReference>
<dbReference type="Proteomes" id="UP000694724">
    <property type="component" value="Unplaced"/>
</dbReference>
<dbReference type="Proteomes" id="UP000694725">
    <property type="component" value="Unplaced"/>
</dbReference>
<dbReference type="Proteomes" id="UP000694726">
    <property type="component" value="Unplaced"/>
</dbReference>
<dbReference type="Proteomes" id="UP000694727">
    <property type="component" value="Unplaced"/>
</dbReference>
<dbReference type="Proteomes" id="UP000694728">
    <property type="component" value="Unplaced"/>
</dbReference>
<dbReference type="GO" id="GO:0005576">
    <property type="term" value="C:extracellular region"/>
    <property type="evidence" value="ECO:0007669"/>
    <property type="project" value="UniProtKB-SubCell"/>
</dbReference>
<dbReference type="GO" id="GO:0030250">
    <property type="term" value="F:guanylate cyclase activator activity"/>
    <property type="evidence" value="ECO:0000318"/>
    <property type="project" value="GO_Central"/>
</dbReference>
<dbReference type="FunFam" id="3.90.1450.10:FF:000002">
    <property type="entry name" value="Guanylate cyclase activator 2A"/>
    <property type="match status" value="1"/>
</dbReference>
<dbReference type="Gene3D" id="3.90.1450.10">
    <property type="entry name" value="Guanylin"/>
    <property type="match status" value="1"/>
</dbReference>
<dbReference type="InterPro" id="IPR000879">
    <property type="entry name" value="Guanylin"/>
</dbReference>
<dbReference type="InterPro" id="IPR036382">
    <property type="entry name" value="Guanylin_sf"/>
</dbReference>
<dbReference type="PANTHER" id="PTHR11318:SF3">
    <property type="entry name" value="GUANYLIN"/>
    <property type="match status" value="1"/>
</dbReference>
<dbReference type="PANTHER" id="PTHR11318">
    <property type="entry name" value="GUANYLIN FAMILY MEMBER"/>
    <property type="match status" value="1"/>
</dbReference>
<dbReference type="Pfam" id="PF02058">
    <property type="entry name" value="Guanylin"/>
    <property type="match status" value="1"/>
</dbReference>
<dbReference type="PIRSF" id="PIRSF001849">
    <property type="entry name" value="Guanylin"/>
    <property type="match status" value="1"/>
</dbReference>
<dbReference type="PRINTS" id="PR00774">
    <property type="entry name" value="GUANYLIN"/>
</dbReference>
<dbReference type="SUPFAM" id="SSF89890">
    <property type="entry name" value="Proguanylin"/>
    <property type="match status" value="1"/>
</dbReference>
<accession>P79897</accession>
<proteinExistence type="inferred from homology"/>
<evidence type="ECO:0000250" key="1"/>
<evidence type="ECO:0000255" key="2"/>
<evidence type="ECO:0000305" key="3"/>
<sequence length="109" mass="11938">MNTFLFPTLCLLGVWAALAGGVTVKDGEFSFSLESVKKLKDLQELQKPRNPRNLDGPIIPVLCNSPKFPEELKPICQKPNAEEILERLETIAQDPSTCEICAYAACAGC</sequence>